<dbReference type="EMBL" id="AY653733">
    <property type="protein sequence ID" value="AAV50284.1"/>
    <property type="molecule type" value="Genomic_DNA"/>
</dbReference>
<dbReference type="SMR" id="Q5UP89"/>
<dbReference type="KEGG" id="vg:9924579"/>
<dbReference type="OrthoDB" id="29043at10239"/>
<dbReference type="Proteomes" id="UP000001134">
    <property type="component" value="Genome"/>
</dbReference>
<dbReference type="Pfam" id="PF13455">
    <property type="entry name" value="MUG113"/>
    <property type="match status" value="1"/>
</dbReference>
<protein>
    <recommendedName>
        <fullName>Uncharacterized protein R9</fullName>
    </recommendedName>
</protein>
<name>YR009_MIMIV</name>
<organismHost>
    <name type="scientific">Acanthamoeba polyphaga</name>
    <name type="common">Amoeba</name>
    <dbReference type="NCBI Taxonomy" id="5757"/>
</organismHost>
<gene>
    <name type="ordered locus">MIMI_R9</name>
</gene>
<accession>Q5UP89</accession>
<reference key="1">
    <citation type="journal article" date="2004" name="Science">
        <title>The 1.2-megabase genome sequence of Mimivirus.</title>
        <authorList>
            <person name="Raoult D."/>
            <person name="Audic S."/>
            <person name="Robert C."/>
            <person name="Abergel C."/>
            <person name="Renesto P."/>
            <person name="Ogata H."/>
            <person name="La Scola B."/>
            <person name="Susan M."/>
            <person name="Claverie J.-M."/>
        </authorList>
    </citation>
    <scope>NUCLEOTIDE SEQUENCE [LARGE SCALE GENOMIC DNA]</scope>
    <source>
        <strain>Rowbotham-Bradford</strain>
    </source>
</reference>
<comment type="similarity">
    <text evidence="1">Belongs to the mimivirus R1 family.</text>
</comment>
<keyword id="KW-1185">Reference proteome</keyword>
<sequence>MKSKQIIAFYVITTNYHHNKKTYKIGIHTGTLEDLISRYMTYFPDLIVKYFQYTVIAREVETNLKKNLRKHRVVNIKGGRSEWINMEYEKLYAHIKCEINSDKNIIINDVTNMELVNKYTKELLINKLSRTIYQTIFDIEICKPELLAGIDESKYNLDELLTKQTLSETKSLALKKMLFMKTFGITDSSHQEEFIEFYNEYASKIVIIRRFERFFSYDKQYNEIDYNLNHHNDGKDKLRDKIILEFINFILGKNKTNYKSDSLSYILSQDEHNTAVLTVAEQSMYFANEDKFRPLFNKNKGKFKEINEFNFKHYFETVQAILRSYGIDYCRGKRKRINGGREFEYSLSVNKQIRDIIDFKYGLSDSVNDFPNLFHK</sequence>
<feature type="chain" id="PRO_0000249866" description="Uncharacterized protein R9">
    <location>
        <begin position="1"/>
        <end position="376"/>
    </location>
</feature>
<evidence type="ECO:0000305" key="1"/>
<organism>
    <name type="scientific">Acanthamoeba polyphaga mimivirus</name>
    <name type="common">APMV</name>
    <dbReference type="NCBI Taxonomy" id="212035"/>
    <lineage>
        <taxon>Viruses</taxon>
        <taxon>Varidnaviria</taxon>
        <taxon>Bamfordvirae</taxon>
        <taxon>Nucleocytoviricota</taxon>
        <taxon>Megaviricetes</taxon>
        <taxon>Imitervirales</taxon>
        <taxon>Mimiviridae</taxon>
        <taxon>Megamimivirinae</taxon>
        <taxon>Mimivirus</taxon>
        <taxon>Mimivirus bradfordmassiliense</taxon>
    </lineage>
</organism>
<proteinExistence type="inferred from homology"/>